<comment type="function">
    <text evidence="1">Catalyzes the radical-mediated insertion of two sulfur atoms into the C-6 and C-8 positions of the octanoyl moiety bound to the lipoyl domains of lipoate-dependent enzymes, thereby converting the octanoylated domains into lipoylated derivatives.</text>
</comment>
<comment type="catalytic activity">
    <reaction evidence="1">
        <text>[[Fe-S] cluster scaffold protein carrying a second [4Fe-4S](2+) cluster] + N(6)-octanoyl-L-lysyl-[protein] + 2 oxidized [2Fe-2S]-[ferredoxin] + 2 S-adenosyl-L-methionine + 4 H(+) = [[Fe-S] cluster scaffold protein] + N(6)-[(R)-dihydrolipoyl]-L-lysyl-[protein] + 4 Fe(3+) + 2 hydrogen sulfide + 2 5'-deoxyadenosine + 2 L-methionine + 2 reduced [2Fe-2S]-[ferredoxin]</text>
        <dbReference type="Rhea" id="RHEA:16585"/>
        <dbReference type="Rhea" id="RHEA-COMP:9928"/>
        <dbReference type="Rhea" id="RHEA-COMP:10000"/>
        <dbReference type="Rhea" id="RHEA-COMP:10001"/>
        <dbReference type="Rhea" id="RHEA-COMP:10475"/>
        <dbReference type="Rhea" id="RHEA-COMP:14568"/>
        <dbReference type="Rhea" id="RHEA-COMP:14569"/>
        <dbReference type="ChEBI" id="CHEBI:15378"/>
        <dbReference type="ChEBI" id="CHEBI:17319"/>
        <dbReference type="ChEBI" id="CHEBI:29034"/>
        <dbReference type="ChEBI" id="CHEBI:29919"/>
        <dbReference type="ChEBI" id="CHEBI:33722"/>
        <dbReference type="ChEBI" id="CHEBI:33737"/>
        <dbReference type="ChEBI" id="CHEBI:33738"/>
        <dbReference type="ChEBI" id="CHEBI:57844"/>
        <dbReference type="ChEBI" id="CHEBI:59789"/>
        <dbReference type="ChEBI" id="CHEBI:78809"/>
        <dbReference type="ChEBI" id="CHEBI:83100"/>
        <dbReference type="EC" id="2.8.1.8"/>
    </reaction>
</comment>
<comment type="cofactor">
    <cofactor evidence="1">
        <name>[4Fe-4S] cluster</name>
        <dbReference type="ChEBI" id="CHEBI:49883"/>
    </cofactor>
    <text evidence="1">Binds 2 [4Fe-4S] clusters per subunit. One cluster is coordinated with 3 cysteines and an exchangeable S-adenosyl-L-methionine.</text>
</comment>
<comment type="pathway">
    <text evidence="1">Protein modification; protein lipoylation via endogenous pathway; protein N(6)-(lipoyl)lysine from octanoyl-[acyl-carrier-protein]: step 2/2.</text>
</comment>
<comment type="subcellular location">
    <subcellularLocation>
        <location evidence="1">Cytoplasm</location>
    </subcellularLocation>
</comment>
<comment type="similarity">
    <text evidence="1">Belongs to the radical SAM superfamily. Lipoyl synthase family.</text>
</comment>
<accession>Q324R5</accession>
<organism>
    <name type="scientific">Shigella boydii serotype 4 (strain Sb227)</name>
    <dbReference type="NCBI Taxonomy" id="300268"/>
    <lineage>
        <taxon>Bacteria</taxon>
        <taxon>Pseudomonadati</taxon>
        <taxon>Pseudomonadota</taxon>
        <taxon>Gammaproteobacteria</taxon>
        <taxon>Enterobacterales</taxon>
        <taxon>Enterobacteriaceae</taxon>
        <taxon>Shigella</taxon>
    </lineage>
</organism>
<sequence length="321" mass="36072">MSKPIVMERGVKYRDADKMALIPVKNVATEREALLRKPEWMKIKLPADSTRIQGIKAAMRKNGLHSVCEEASCPNLAECFNHGTATFMILGAICTRRCPFCDVAHGRPVAPDANEPVKLAQTIADMALRYVVITSVDRDDLRDGGAQHFADCITAIREKSPQIKIETLVPDFRGRMDRALDILTATPPDVFNHNLENVPRIYRQVRPGADYNWSLKLLERFKEAHPEIPTKSGLMVGLGETNEEIIEVMRDLRRHGVTMLTLGQYLQPSRHHLPVQRYVSPDEFDEMKAEALAMGFTHAACGPFVRSSYHADLQAKGMEVK</sequence>
<evidence type="ECO:0000255" key="1">
    <source>
        <dbReference type="HAMAP-Rule" id="MF_00206"/>
    </source>
</evidence>
<evidence type="ECO:0000255" key="2">
    <source>
        <dbReference type="PROSITE-ProRule" id="PRU01266"/>
    </source>
</evidence>
<reference key="1">
    <citation type="journal article" date="2005" name="Nucleic Acids Res.">
        <title>Genome dynamics and diversity of Shigella species, the etiologic agents of bacillary dysentery.</title>
        <authorList>
            <person name="Yang F."/>
            <person name="Yang J."/>
            <person name="Zhang X."/>
            <person name="Chen L."/>
            <person name="Jiang Y."/>
            <person name="Yan Y."/>
            <person name="Tang X."/>
            <person name="Wang J."/>
            <person name="Xiong Z."/>
            <person name="Dong J."/>
            <person name="Xue Y."/>
            <person name="Zhu Y."/>
            <person name="Xu X."/>
            <person name="Sun L."/>
            <person name="Chen S."/>
            <person name="Nie H."/>
            <person name="Peng J."/>
            <person name="Xu J."/>
            <person name="Wang Y."/>
            <person name="Yuan Z."/>
            <person name="Wen Y."/>
            <person name="Yao Z."/>
            <person name="Shen Y."/>
            <person name="Qiang B."/>
            <person name="Hou Y."/>
            <person name="Yu J."/>
            <person name="Jin Q."/>
        </authorList>
    </citation>
    <scope>NUCLEOTIDE SEQUENCE [LARGE SCALE GENOMIC DNA]</scope>
    <source>
        <strain>Sb227</strain>
    </source>
</reference>
<proteinExistence type="inferred from homology"/>
<keyword id="KW-0004">4Fe-4S</keyword>
<keyword id="KW-0963">Cytoplasm</keyword>
<keyword id="KW-0408">Iron</keyword>
<keyword id="KW-0411">Iron-sulfur</keyword>
<keyword id="KW-0479">Metal-binding</keyword>
<keyword id="KW-0949">S-adenosyl-L-methionine</keyword>
<keyword id="KW-0808">Transferase</keyword>
<feature type="chain" id="PRO_1000012282" description="Lipoyl synthase">
    <location>
        <begin position="1"/>
        <end position="321"/>
    </location>
</feature>
<feature type="domain" description="Radical SAM core" evidence="2">
    <location>
        <begin position="80"/>
        <end position="297"/>
    </location>
</feature>
<feature type="binding site" evidence="1">
    <location>
        <position position="68"/>
    </location>
    <ligand>
        <name>[4Fe-4S] cluster</name>
        <dbReference type="ChEBI" id="CHEBI:49883"/>
        <label>1</label>
    </ligand>
</feature>
<feature type="binding site" evidence="1">
    <location>
        <position position="73"/>
    </location>
    <ligand>
        <name>[4Fe-4S] cluster</name>
        <dbReference type="ChEBI" id="CHEBI:49883"/>
        <label>1</label>
    </ligand>
</feature>
<feature type="binding site" evidence="1">
    <location>
        <position position="79"/>
    </location>
    <ligand>
        <name>[4Fe-4S] cluster</name>
        <dbReference type="ChEBI" id="CHEBI:49883"/>
        <label>1</label>
    </ligand>
</feature>
<feature type="binding site" evidence="1">
    <location>
        <position position="94"/>
    </location>
    <ligand>
        <name>[4Fe-4S] cluster</name>
        <dbReference type="ChEBI" id="CHEBI:49883"/>
        <label>2</label>
        <note>4Fe-4S-S-AdoMet</note>
    </ligand>
</feature>
<feature type="binding site" evidence="1">
    <location>
        <position position="98"/>
    </location>
    <ligand>
        <name>[4Fe-4S] cluster</name>
        <dbReference type="ChEBI" id="CHEBI:49883"/>
        <label>2</label>
        <note>4Fe-4S-S-AdoMet</note>
    </ligand>
</feature>
<feature type="binding site" evidence="1">
    <location>
        <position position="101"/>
    </location>
    <ligand>
        <name>[4Fe-4S] cluster</name>
        <dbReference type="ChEBI" id="CHEBI:49883"/>
        <label>2</label>
        <note>4Fe-4S-S-AdoMet</note>
    </ligand>
</feature>
<feature type="binding site" evidence="1">
    <location>
        <position position="308"/>
    </location>
    <ligand>
        <name>[4Fe-4S] cluster</name>
        <dbReference type="ChEBI" id="CHEBI:49883"/>
        <label>1</label>
    </ligand>
</feature>
<dbReference type="EC" id="2.8.1.8" evidence="1"/>
<dbReference type="EMBL" id="CP000036">
    <property type="protein sequence ID" value="ABB65193.1"/>
    <property type="molecule type" value="Genomic_DNA"/>
</dbReference>
<dbReference type="RefSeq" id="WP_000042632.1">
    <property type="nucleotide sequence ID" value="NC_007613.1"/>
</dbReference>
<dbReference type="SMR" id="Q324R5"/>
<dbReference type="GeneID" id="93776854"/>
<dbReference type="KEGG" id="sbo:SBO_0492"/>
<dbReference type="HOGENOM" id="CLU_033144_2_1_6"/>
<dbReference type="UniPathway" id="UPA00538">
    <property type="reaction ID" value="UER00593"/>
</dbReference>
<dbReference type="Proteomes" id="UP000007067">
    <property type="component" value="Chromosome"/>
</dbReference>
<dbReference type="GO" id="GO:0005737">
    <property type="term" value="C:cytoplasm"/>
    <property type="evidence" value="ECO:0007669"/>
    <property type="project" value="UniProtKB-SubCell"/>
</dbReference>
<dbReference type="GO" id="GO:0051539">
    <property type="term" value="F:4 iron, 4 sulfur cluster binding"/>
    <property type="evidence" value="ECO:0007669"/>
    <property type="project" value="UniProtKB-UniRule"/>
</dbReference>
<dbReference type="GO" id="GO:0016992">
    <property type="term" value="F:lipoate synthase activity"/>
    <property type="evidence" value="ECO:0007669"/>
    <property type="project" value="UniProtKB-UniRule"/>
</dbReference>
<dbReference type="GO" id="GO:0046872">
    <property type="term" value="F:metal ion binding"/>
    <property type="evidence" value="ECO:0007669"/>
    <property type="project" value="UniProtKB-KW"/>
</dbReference>
<dbReference type="CDD" id="cd01335">
    <property type="entry name" value="Radical_SAM"/>
    <property type="match status" value="1"/>
</dbReference>
<dbReference type="FunFam" id="3.20.20.70:FF:000023">
    <property type="entry name" value="Lipoyl synthase"/>
    <property type="match status" value="1"/>
</dbReference>
<dbReference type="Gene3D" id="3.20.20.70">
    <property type="entry name" value="Aldolase class I"/>
    <property type="match status" value="1"/>
</dbReference>
<dbReference type="HAMAP" id="MF_00206">
    <property type="entry name" value="Lipoyl_synth"/>
    <property type="match status" value="1"/>
</dbReference>
<dbReference type="InterPro" id="IPR013785">
    <property type="entry name" value="Aldolase_TIM"/>
</dbReference>
<dbReference type="InterPro" id="IPR006638">
    <property type="entry name" value="Elp3/MiaA/NifB-like_rSAM"/>
</dbReference>
<dbReference type="InterPro" id="IPR031691">
    <property type="entry name" value="LIAS_N"/>
</dbReference>
<dbReference type="InterPro" id="IPR003698">
    <property type="entry name" value="Lipoyl_synth"/>
</dbReference>
<dbReference type="InterPro" id="IPR007197">
    <property type="entry name" value="rSAM"/>
</dbReference>
<dbReference type="NCBIfam" id="TIGR00510">
    <property type="entry name" value="lipA"/>
    <property type="match status" value="1"/>
</dbReference>
<dbReference type="NCBIfam" id="NF004019">
    <property type="entry name" value="PRK05481.1"/>
    <property type="match status" value="1"/>
</dbReference>
<dbReference type="NCBIfam" id="NF009544">
    <property type="entry name" value="PRK12928.1"/>
    <property type="match status" value="1"/>
</dbReference>
<dbReference type="PANTHER" id="PTHR10949">
    <property type="entry name" value="LIPOYL SYNTHASE"/>
    <property type="match status" value="1"/>
</dbReference>
<dbReference type="PANTHER" id="PTHR10949:SF0">
    <property type="entry name" value="LIPOYL SYNTHASE, MITOCHONDRIAL"/>
    <property type="match status" value="1"/>
</dbReference>
<dbReference type="Pfam" id="PF16881">
    <property type="entry name" value="LIAS_N"/>
    <property type="match status" value="1"/>
</dbReference>
<dbReference type="Pfam" id="PF04055">
    <property type="entry name" value="Radical_SAM"/>
    <property type="match status" value="1"/>
</dbReference>
<dbReference type="PIRSF" id="PIRSF005963">
    <property type="entry name" value="Lipoyl_synth"/>
    <property type="match status" value="1"/>
</dbReference>
<dbReference type="SFLD" id="SFLDF00271">
    <property type="entry name" value="lipoyl_synthase"/>
    <property type="match status" value="1"/>
</dbReference>
<dbReference type="SFLD" id="SFLDG01058">
    <property type="entry name" value="lipoyl_synthase_like"/>
    <property type="match status" value="1"/>
</dbReference>
<dbReference type="SMART" id="SM00729">
    <property type="entry name" value="Elp3"/>
    <property type="match status" value="1"/>
</dbReference>
<dbReference type="SUPFAM" id="SSF102114">
    <property type="entry name" value="Radical SAM enzymes"/>
    <property type="match status" value="1"/>
</dbReference>
<dbReference type="PROSITE" id="PS51918">
    <property type="entry name" value="RADICAL_SAM"/>
    <property type="match status" value="1"/>
</dbReference>
<name>LIPA_SHIBS</name>
<protein>
    <recommendedName>
        <fullName evidence="1">Lipoyl synthase</fullName>
        <ecNumber evidence="1">2.8.1.8</ecNumber>
    </recommendedName>
    <alternativeName>
        <fullName evidence="1">Lip-syn</fullName>
        <shortName evidence="1">LS</shortName>
    </alternativeName>
    <alternativeName>
        <fullName evidence="1">Lipoate synthase</fullName>
    </alternativeName>
    <alternativeName>
        <fullName evidence="1">Lipoic acid synthase</fullName>
    </alternativeName>
    <alternativeName>
        <fullName evidence="1">Sulfur insertion protein LipA</fullName>
    </alternativeName>
</protein>
<gene>
    <name evidence="1" type="primary">lipA</name>
    <name type="ordered locus">SBO_0492</name>
</gene>